<gene>
    <name type="primary">MED8</name>
    <name type="synonym">Arc32</name>
    <name type="ORF">CG13867</name>
</gene>
<name>MED8_DROME</name>
<reference key="1">
    <citation type="journal article" date="2000" name="Science">
        <title>The genome sequence of Drosophila melanogaster.</title>
        <authorList>
            <person name="Adams M.D."/>
            <person name="Celniker S.E."/>
            <person name="Holt R.A."/>
            <person name="Evans C.A."/>
            <person name="Gocayne J.D."/>
            <person name="Amanatides P.G."/>
            <person name="Scherer S.E."/>
            <person name="Li P.W."/>
            <person name="Hoskins R.A."/>
            <person name="Galle R.F."/>
            <person name="George R.A."/>
            <person name="Lewis S.E."/>
            <person name="Richards S."/>
            <person name="Ashburner M."/>
            <person name="Henderson S.N."/>
            <person name="Sutton G.G."/>
            <person name="Wortman J.R."/>
            <person name="Yandell M.D."/>
            <person name="Zhang Q."/>
            <person name="Chen L.X."/>
            <person name="Brandon R.C."/>
            <person name="Rogers Y.-H.C."/>
            <person name="Blazej R.G."/>
            <person name="Champe M."/>
            <person name="Pfeiffer B.D."/>
            <person name="Wan K.H."/>
            <person name="Doyle C."/>
            <person name="Baxter E.G."/>
            <person name="Helt G."/>
            <person name="Nelson C.R."/>
            <person name="Miklos G.L.G."/>
            <person name="Abril J.F."/>
            <person name="Agbayani A."/>
            <person name="An H.-J."/>
            <person name="Andrews-Pfannkoch C."/>
            <person name="Baldwin D."/>
            <person name="Ballew R.M."/>
            <person name="Basu A."/>
            <person name="Baxendale J."/>
            <person name="Bayraktaroglu L."/>
            <person name="Beasley E.M."/>
            <person name="Beeson K.Y."/>
            <person name="Benos P.V."/>
            <person name="Berman B.P."/>
            <person name="Bhandari D."/>
            <person name="Bolshakov S."/>
            <person name="Borkova D."/>
            <person name="Botchan M.R."/>
            <person name="Bouck J."/>
            <person name="Brokstein P."/>
            <person name="Brottier P."/>
            <person name="Burtis K.C."/>
            <person name="Busam D.A."/>
            <person name="Butler H."/>
            <person name="Cadieu E."/>
            <person name="Center A."/>
            <person name="Chandra I."/>
            <person name="Cherry J.M."/>
            <person name="Cawley S."/>
            <person name="Dahlke C."/>
            <person name="Davenport L.B."/>
            <person name="Davies P."/>
            <person name="de Pablos B."/>
            <person name="Delcher A."/>
            <person name="Deng Z."/>
            <person name="Mays A.D."/>
            <person name="Dew I."/>
            <person name="Dietz S.M."/>
            <person name="Dodson K."/>
            <person name="Doup L.E."/>
            <person name="Downes M."/>
            <person name="Dugan-Rocha S."/>
            <person name="Dunkov B.C."/>
            <person name="Dunn P."/>
            <person name="Durbin K.J."/>
            <person name="Evangelista C.C."/>
            <person name="Ferraz C."/>
            <person name="Ferriera S."/>
            <person name="Fleischmann W."/>
            <person name="Fosler C."/>
            <person name="Gabrielian A.E."/>
            <person name="Garg N.S."/>
            <person name="Gelbart W.M."/>
            <person name="Glasser K."/>
            <person name="Glodek A."/>
            <person name="Gong F."/>
            <person name="Gorrell J.H."/>
            <person name="Gu Z."/>
            <person name="Guan P."/>
            <person name="Harris M."/>
            <person name="Harris N.L."/>
            <person name="Harvey D.A."/>
            <person name="Heiman T.J."/>
            <person name="Hernandez J.R."/>
            <person name="Houck J."/>
            <person name="Hostin D."/>
            <person name="Houston K.A."/>
            <person name="Howland T.J."/>
            <person name="Wei M.-H."/>
            <person name="Ibegwam C."/>
            <person name="Jalali M."/>
            <person name="Kalush F."/>
            <person name="Karpen G.H."/>
            <person name="Ke Z."/>
            <person name="Kennison J.A."/>
            <person name="Ketchum K.A."/>
            <person name="Kimmel B.E."/>
            <person name="Kodira C.D."/>
            <person name="Kraft C.L."/>
            <person name="Kravitz S."/>
            <person name="Kulp D."/>
            <person name="Lai Z."/>
            <person name="Lasko P."/>
            <person name="Lei Y."/>
            <person name="Levitsky A.A."/>
            <person name="Li J.H."/>
            <person name="Li Z."/>
            <person name="Liang Y."/>
            <person name="Lin X."/>
            <person name="Liu X."/>
            <person name="Mattei B."/>
            <person name="McIntosh T.C."/>
            <person name="McLeod M.P."/>
            <person name="McPherson D."/>
            <person name="Merkulov G."/>
            <person name="Milshina N.V."/>
            <person name="Mobarry C."/>
            <person name="Morris J."/>
            <person name="Moshrefi A."/>
            <person name="Mount S.M."/>
            <person name="Moy M."/>
            <person name="Murphy B."/>
            <person name="Murphy L."/>
            <person name="Muzny D.M."/>
            <person name="Nelson D.L."/>
            <person name="Nelson D.R."/>
            <person name="Nelson K.A."/>
            <person name="Nixon K."/>
            <person name="Nusskern D.R."/>
            <person name="Pacleb J.M."/>
            <person name="Palazzolo M."/>
            <person name="Pittman G.S."/>
            <person name="Pan S."/>
            <person name="Pollard J."/>
            <person name="Puri V."/>
            <person name="Reese M.G."/>
            <person name="Reinert K."/>
            <person name="Remington K."/>
            <person name="Saunders R.D.C."/>
            <person name="Scheeler F."/>
            <person name="Shen H."/>
            <person name="Shue B.C."/>
            <person name="Siden-Kiamos I."/>
            <person name="Simpson M."/>
            <person name="Skupski M.P."/>
            <person name="Smith T.J."/>
            <person name="Spier E."/>
            <person name="Spradling A.C."/>
            <person name="Stapleton M."/>
            <person name="Strong R."/>
            <person name="Sun E."/>
            <person name="Svirskas R."/>
            <person name="Tector C."/>
            <person name="Turner R."/>
            <person name="Venter E."/>
            <person name="Wang A.H."/>
            <person name="Wang X."/>
            <person name="Wang Z.-Y."/>
            <person name="Wassarman D.A."/>
            <person name="Weinstock G.M."/>
            <person name="Weissenbach J."/>
            <person name="Williams S.M."/>
            <person name="Woodage T."/>
            <person name="Worley K.C."/>
            <person name="Wu D."/>
            <person name="Yang S."/>
            <person name="Yao Q.A."/>
            <person name="Ye J."/>
            <person name="Yeh R.-F."/>
            <person name="Zaveri J.S."/>
            <person name="Zhan M."/>
            <person name="Zhang G."/>
            <person name="Zhao Q."/>
            <person name="Zheng L."/>
            <person name="Zheng X.H."/>
            <person name="Zhong F.N."/>
            <person name="Zhong W."/>
            <person name="Zhou X."/>
            <person name="Zhu S.C."/>
            <person name="Zhu X."/>
            <person name="Smith H.O."/>
            <person name="Gibbs R.A."/>
            <person name="Myers E.W."/>
            <person name="Rubin G.M."/>
            <person name="Venter J.C."/>
        </authorList>
    </citation>
    <scope>NUCLEOTIDE SEQUENCE [LARGE SCALE GENOMIC DNA]</scope>
    <source>
        <strain>Berkeley</strain>
    </source>
</reference>
<reference key="2">
    <citation type="journal article" date="2002" name="Genome Biol.">
        <title>Annotation of the Drosophila melanogaster euchromatic genome: a systematic review.</title>
        <authorList>
            <person name="Misra S."/>
            <person name="Crosby M.A."/>
            <person name="Mungall C.J."/>
            <person name="Matthews B.B."/>
            <person name="Campbell K.S."/>
            <person name="Hradecky P."/>
            <person name="Huang Y."/>
            <person name="Kaminker J.S."/>
            <person name="Millburn G.H."/>
            <person name="Prochnik S.E."/>
            <person name="Smith C.D."/>
            <person name="Tupy J.L."/>
            <person name="Whitfield E.J."/>
            <person name="Bayraktaroglu L."/>
            <person name="Berman B.P."/>
            <person name="Bettencourt B.R."/>
            <person name="Celniker S.E."/>
            <person name="de Grey A.D.N.J."/>
            <person name="Drysdale R.A."/>
            <person name="Harris N.L."/>
            <person name="Richter J."/>
            <person name="Russo S."/>
            <person name="Schroeder A.J."/>
            <person name="Shu S.Q."/>
            <person name="Stapleton M."/>
            <person name="Yamada C."/>
            <person name="Ashburner M."/>
            <person name="Gelbart W.M."/>
            <person name="Rubin G.M."/>
            <person name="Lewis S.E."/>
        </authorList>
    </citation>
    <scope>GENOME REANNOTATION</scope>
    <source>
        <strain>Berkeley</strain>
    </source>
</reference>
<reference key="3">
    <citation type="journal article" date="2002" name="Genome Biol.">
        <title>A Drosophila full-length cDNA resource.</title>
        <authorList>
            <person name="Stapleton M."/>
            <person name="Carlson J.W."/>
            <person name="Brokstein P."/>
            <person name="Yu C."/>
            <person name="Champe M."/>
            <person name="George R.A."/>
            <person name="Guarin H."/>
            <person name="Kronmiller B."/>
            <person name="Pacleb J.M."/>
            <person name="Park S."/>
            <person name="Wan K.H."/>
            <person name="Rubin G.M."/>
            <person name="Celniker S.E."/>
        </authorList>
    </citation>
    <scope>NUCLEOTIDE SEQUENCE [LARGE SCALE MRNA]</scope>
    <source>
        <strain>Berkeley</strain>
        <tissue>Embryo</tissue>
    </source>
</reference>
<reference key="4">
    <citation type="journal article" date="2006" name="Genes Dev.">
        <title>Coactivator cross-talk specifies transcriptional output.</title>
        <authorList>
            <person name="Marr M.T. II"/>
            <person name="Isogai Y."/>
            <person name="Wright K.J."/>
            <person name="Tjian R."/>
        </authorList>
    </citation>
    <scope>FUNCTION</scope>
</reference>
<evidence type="ECO:0000250" key="1"/>
<evidence type="ECO:0000255" key="2"/>
<evidence type="ECO:0000256" key="3">
    <source>
        <dbReference type="SAM" id="MobiDB-lite"/>
    </source>
</evidence>
<evidence type="ECO:0000269" key="4">
    <source>
    </source>
</evidence>
<evidence type="ECO:0000305" key="5"/>
<organism>
    <name type="scientific">Drosophila melanogaster</name>
    <name type="common">Fruit fly</name>
    <dbReference type="NCBI Taxonomy" id="7227"/>
    <lineage>
        <taxon>Eukaryota</taxon>
        <taxon>Metazoa</taxon>
        <taxon>Ecdysozoa</taxon>
        <taxon>Arthropoda</taxon>
        <taxon>Hexapoda</taxon>
        <taxon>Insecta</taxon>
        <taxon>Pterygota</taxon>
        <taxon>Neoptera</taxon>
        <taxon>Endopterygota</taxon>
        <taxon>Diptera</taxon>
        <taxon>Brachycera</taxon>
        <taxon>Muscomorpha</taxon>
        <taxon>Ephydroidea</taxon>
        <taxon>Drosophilidae</taxon>
        <taxon>Drosophila</taxon>
        <taxon>Sophophora</taxon>
    </lineage>
</organism>
<keyword id="KW-0010">Activator</keyword>
<keyword id="KW-0175">Coiled coil</keyword>
<keyword id="KW-0539">Nucleus</keyword>
<keyword id="KW-1185">Reference proteome</keyword>
<keyword id="KW-0804">Transcription</keyword>
<keyword id="KW-0805">Transcription regulation</keyword>
<sequence length="252" mass="27948">MQRDEKLFELTLDTVLQRLNDLKLAVLSMIQKLELEYETINWPTFLDNFAIISSHLTGLTKILAKEQCPPLRNRTVLPLLVSMDRDDTLINITEGRVPVFSHDIVPDYLRTRPDPITEQKMLQNEQKAANLTNDAAMKQVTQYNKVVSHVLDMVSKAREEWEIESSSRTGIQQTSSMADTQLLVAAVGMGKGLKLTNYGPGPGMMVPPSIRAPSPMGGPAMSPGNVQQQLGKAPSAVKTNIKSANQVHPFSR</sequence>
<dbReference type="EMBL" id="AE013599">
    <property type="protein sequence ID" value="AAM68406.1"/>
    <property type="molecule type" value="Genomic_DNA"/>
</dbReference>
<dbReference type="EMBL" id="AY071108">
    <property type="protein sequence ID" value="AAL48730.1"/>
    <property type="molecule type" value="mRNA"/>
</dbReference>
<dbReference type="RefSeq" id="NP_722456.1">
    <property type="nucleotide sequence ID" value="NM_153772.2"/>
</dbReference>
<dbReference type="SMR" id="A1ZBT5"/>
<dbReference type="BioGRID" id="62960">
    <property type="interactions" value="44"/>
</dbReference>
<dbReference type="ComplexPortal" id="CPX-2308">
    <property type="entry name" value="Core mediator complex"/>
</dbReference>
<dbReference type="FunCoup" id="A1ZBT5">
    <property type="interactions" value="1793"/>
</dbReference>
<dbReference type="IntAct" id="A1ZBT5">
    <property type="interactions" value="67"/>
</dbReference>
<dbReference type="STRING" id="7227.FBpp0085609"/>
<dbReference type="PaxDb" id="7227-FBpp0085609"/>
<dbReference type="DNASU" id="37305"/>
<dbReference type="EnsemblMetazoa" id="FBtr0086297">
    <property type="protein sequence ID" value="FBpp0085609"/>
    <property type="gene ID" value="FBgn0034503"/>
</dbReference>
<dbReference type="GeneID" id="37305"/>
<dbReference type="KEGG" id="dme:Dmel_CG13867"/>
<dbReference type="AGR" id="FB:FBgn0034503"/>
<dbReference type="CTD" id="112950"/>
<dbReference type="FlyBase" id="FBgn0034503">
    <property type="gene designation" value="MED8"/>
</dbReference>
<dbReference type="VEuPathDB" id="VectorBase:FBgn0034503"/>
<dbReference type="eggNOG" id="KOG3583">
    <property type="taxonomic scope" value="Eukaryota"/>
</dbReference>
<dbReference type="HOGENOM" id="CLU_085476_0_0_1"/>
<dbReference type="InParanoid" id="A1ZBT5"/>
<dbReference type="OMA" id="FKLEHEY"/>
<dbReference type="OrthoDB" id="150687at2759"/>
<dbReference type="PhylomeDB" id="A1ZBT5"/>
<dbReference type="BioGRID-ORCS" id="37305">
    <property type="hits" value="1 hit in 1 CRISPR screen"/>
</dbReference>
<dbReference type="GenomeRNAi" id="37305"/>
<dbReference type="PRO" id="PR:A1ZBT5"/>
<dbReference type="Proteomes" id="UP000000803">
    <property type="component" value="Chromosome 2R"/>
</dbReference>
<dbReference type="Bgee" id="FBgn0034503">
    <property type="expression patterns" value="Expressed in eye disc (Drosophila) and 73 other cell types or tissues"/>
</dbReference>
<dbReference type="ExpressionAtlas" id="A1ZBT5">
    <property type="expression patterns" value="baseline and differential"/>
</dbReference>
<dbReference type="GO" id="GO:0070847">
    <property type="term" value="C:core mediator complex"/>
    <property type="evidence" value="ECO:0000318"/>
    <property type="project" value="GO_Central"/>
</dbReference>
<dbReference type="GO" id="GO:0016592">
    <property type="term" value="C:mediator complex"/>
    <property type="evidence" value="ECO:0000250"/>
    <property type="project" value="FlyBase"/>
</dbReference>
<dbReference type="GO" id="GO:0000978">
    <property type="term" value="F:RNA polymerase II cis-regulatory region sequence-specific DNA binding"/>
    <property type="evidence" value="ECO:0000318"/>
    <property type="project" value="GO_Central"/>
</dbReference>
<dbReference type="GO" id="GO:0003712">
    <property type="term" value="F:transcription coregulator activity"/>
    <property type="evidence" value="ECO:0000315"/>
    <property type="project" value="UniProtKB"/>
</dbReference>
<dbReference type="GO" id="GO:0006357">
    <property type="term" value="P:regulation of transcription by RNA polymerase II"/>
    <property type="evidence" value="ECO:0000315"/>
    <property type="project" value="UniProtKB"/>
</dbReference>
<dbReference type="Gene3D" id="1.20.58.1710">
    <property type="match status" value="1"/>
</dbReference>
<dbReference type="InterPro" id="IPR019364">
    <property type="entry name" value="Mediatior_Med8_fun/met"/>
</dbReference>
<dbReference type="PANTHER" id="PTHR13074">
    <property type="entry name" value="MEDIATOR OF RNA POLYMERASE II TRANSCRIPTION SUBUNIT 8"/>
    <property type="match status" value="1"/>
</dbReference>
<dbReference type="PANTHER" id="PTHR13074:SF9">
    <property type="entry name" value="MEDIATOR OF RNA POLYMERASE II TRANSCRIPTION SUBUNIT 8"/>
    <property type="match status" value="1"/>
</dbReference>
<dbReference type="Pfam" id="PF10232">
    <property type="entry name" value="Med8"/>
    <property type="match status" value="1"/>
</dbReference>
<proteinExistence type="evidence at protein level"/>
<protein>
    <recommendedName>
        <fullName>Mediator of RNA polymerase II transcription subunit 8</fullName>
    </recommendedName>
    <alternativeName>
        <fullName>Mediator complex subunit 8</fullName>
    </alternativeName>
</protein>
<comment type="function">
    <text evidence="1 4">Component of the Mediator complex, a coactivator involved in the regulated transcription of nearly all RNA polymerase II-dependent genes. Mediator functions as a bridge to convey information from gene-specific regulatory proteins to the basal RNA polymerase II transcription machinery. Mediator is recruited to promoters by direct interactions with regulatory proteins and serves as a scaffold for the assembly of a functional preinitiation complex with RNA polymerase II and the general transcription factors (By similarity). Required for activated transcription of the MtnA and MtnB genes.</text>
</comment>
<comment type="subunit">
    <text evidence="1">Component of the Mediator complex.</text>
</comment>
<comment type="interaction">
    <interactant intactId="EBI-90766">
        <id>A1ZBT5</id>
    </interactant>
    <interactant intactId="EBI-96589">
        <id>Q7KBL8</id>
        <label>ix</label>
    </interactant>
    <organismsDiffer>false</organismsDiffer>
    <experiments>3</experiments>
</comment>
<comment type="interaction">
    <interactant intactId="EBI-90766">
        <id>A1ZBT5</id>
    </interactant>
    <interactant intactId="EBI-141782">
        <id>Q9VP65</id>
        <label>Trmt112</label>
    </interactant>
    <organismsDiffer>false</organismsDiffer>
    <experiments>3</experiments>
</comment>
<comment type="subcellular location">
    <subcellularLocation>
        <location evidence="5">Nucleus</location>
    </subcellularLocation>
</comment>
<comment type="similarity">
    <text evidence="5">Belongs to the Mediator complex subunit 8 family.</text>
</comment>
<accession>A1ZBT5</accession>
<accession>Q8SZ54</accession>
<feature type="chain" id="PRO_0000304531" description="Mediator of RNA polymerase II transcription subunit 8">
    <location>
        <begin position="1"/>
        <end position="252"/>
    </location>
</feature>
<feature type="region of interest" description="Disordered" evidence="3">
    <location>
        <begin position="215"/>
        <end position="252"/>
    </location>
</feature>
<feature type="coiled-coil region" evidence="2">
    <location>
        <begin position="117"/>
        <end position="142"/>
    </location>
</feature>
<feature type="compositionally biased region" description="Low complexity" evidence="3">
    <location>
        <begin position="215"/>
        <end position="224"/>
    </location>
</feature>
<feature type="compositionally biased region" description="Polar residues" evidence="3">
    <location>
        <begin position="237"/>
        <end position="252"/>
    </location>
</feature>
<feature type="sequence conflict" description="In Ref. 3; AAL48730." evidence="5" ref="3">
    <original>L</original>
    <variation>P</variation>
    <location>
        <position position="151"/>
    </location>
</feature>